<comment type="function">
    <text evidence="2">Negatively regulates long-term potentiation and modulates adult synaptic plasticity (PubMed:35771867). Stabilizes the interaction of RTN4 isoform A/Nogo-A with its receptors, inhibiting clustering of postsynaptic AMPA receptors at synaptic sites (PubMed:35771867). Upon neuronal stimulation, degraded at synapses, reducing RTN4 signaling and allowing AMPA receptor clustering at individual synapses (PubMed:35771867).</text>
</comment>
<comment type="subunit">
    <text evidence="2">Interacts with RTN4 isoform A/Nogo-A; the interaction results in enhanced RTN4-mediated inhibition of AMPA receptor clustering (PubMed:35771867). Also interacts with NCAM1, RANBP2 and CCT8 (PubMed:35771867).</text>
</comment>
<comment type="subcellular location">
    <subcellularLocation>
        <location evidence="2">Synapse</location>
    </subcellularLocation>
    <subcellularLocation>
        <location evidence="2">Synaptic cleft</location>
    </subcellularLocation>
    <text evidence="2">Detected in both the presynaptic and postsynaptic regions of the synapse and is secreted from neurons into the synaptic cleft (PubMed:35771867). May be released by neuronal dense core vesicles which mediate the release of cleaved neuropeptides (PubMed:35771867).</text>
</comment>
<comment type="tissue specificity">
    <text evidence="1">In the postnatal brain, expressed diffusely throughout the hippocampus at a low level at 8 weeks (at protein level) (PubMed:29571919). At 16 weeks, strongly expressed in the stratum lucidum of the hippocampus (at protein level) (PubMed:29571919). In developing and aging brain, expression is strongest in hippocampus, especially in areas CA3 and CA2, throughout the dorsoventral axis (PubMed:29571919).</text>
</comment>
<comment type="developmental stage">
    <text evidence="1 2">Expression increases in the hippocampus between 8 and 16 weeks of age (at protein level) (PubMed:35771867). In brain, expression decreases steadily throughout embryonic development (PubMed:29571919). In liver, expression decreases between 11.5 dpc and 13.5 dpc and then remains relatively low (PubMed:29571919). Expression in the heart shows a 50% increase between 11.5 dpc and 13.5 dpc and then decreases (PubMed:29571919). In the postnatal brain, cerebellum levels decline (PubMed:29571919). In cortical tissue, expression significantly decreases by ~40% between P0 and 3 weeks and then returns to levels comparable to P0 in adult stages (PubMed:29571919). In the hippocampus, expression significantly drops by 40% between P0 and 3 weeks with a slight increase observed between 8 and 16 weeks of age (PubMed:29571919).</text>
</comment>
<comment type="PTM">
    <text evidence="2">Rapidly degraded by proteolysis following neuronal stimulation, resulting in increased AMPA receptor clustering.</text>
</comment>
<comment type="similarity">
    <text evidence="4">Belongs to the UPF0545 family.</text>
</comment>
<proteinExistence type="evidence at protein level"/>
<keyword id="KW-1185">Reference proteome</keyword>
<keyword id="KW-0964">Secreted</keyword>
<keyword id="KW-0770">Synapse</keyword>
<evidence type="ECO:0000269" key="1">
    <source>
    </source>
</evidence>
<evidence type="ECO:0000269" key="2">
    <source>
    </source>
</evidence>
<evidence type="ECO:0000303" key="3">
    <source>
    </source>
</evidence>
<evidence type="ECO:0000305" key="4"/>
<name>CV039_MOUSE</name>
<feature type="chain" id="PRO_0000326131" description="Synaptic plasticity regulator PANTS">
    <location>
        <begin position="1"/>
        <end position="105"/>
    </location>
</feature>
<sequence>MAVAGSWQPPRPCEVYRAEWELCRSVGHVLHHYYVHGKRPDCRQWLRDLTNCREWEESRSAEAQRSLCESEQVRVQAAQKHTLVWALRQRPPTDWNLPLPQEKDK</sequence>
<organism>
    <name type="scientific">Mus musculus</name>
    <name type="common">Mouse</name>
    <dbReference type="NCBI Taxonomy" id="10090"/>
    <lineage>
        <taxon>Eukaryota</taxon>
        <taxon>Metazoa</taxon>
        <taxon>Chordata</taxon>
        <taxon>Craniata</taxon>
        <taxon>Vertebrata</taxon>
        <taxon>Euteleostomi</taxon>
        <taxon>Mammalia</taxon>
        <taxon>Eutheria</taxon>
        <taxon>Euarchontoglires</taxon>
        <taxon>Glires</taxon>
        <taxon>Rodentia</taxon>
        <taxon>Myomorpha</taxon>
        <taxon>Muroidea</taxon>
        <taxon>Muridae</taxon>
        <taxon>Murinae</taxon>
        <taxon>Mus</taxon>
        <taxon>Mus</taxon>
    </lineage>
</organism>
<accession>Q3U595</accession>
<dbReference type="EMBL" id="AK153794">
    <property type="protein sequence ID" value="BAE32185.1"/>
    <property type="molecule type" value="mRNA"/>
</dbReference>
<dbReference type="CCDS" id="CCDS28029.1"/>
<dbReference type="RefSeq" id="NP_001028336.1">
    <property type="nucleotide sequence ID" value="NM_001033164.2"/>
</dbReference>
<dbReference type="FunCoup" id="Q3U595">
    <property type="interactions" value="41"/>
</dbReference>
<dbReference type="STRING" id="10090.ENSMUSP00000060363"/>
<dbReference type="PhosphoSitePlus" id="Q3U595"/>
<dbReference type="PaxDb" id="10090-ENSMUSP00000060363"/>
<dbReference type="PeptideAtlas" id="Q3U595"/>
<dbReference type="Pumba" id="Q3U595"/>
<dbReference type="DNASU" id="72307"/>
<dbReference type="Ensembl" id="ENSMUST00000055413.13">
    <property type="protein sequence ID" value="ENSMUSP00000060363.7"/>
    <property type="gene ID" value="ENSMUSG00000071632.11"/>
</dbReference>
<dbReference type="GeneID" id="72307"/>
<dbReference type="KEGG" id="mmu:72307"/>
<dbReference type="UCSC" id="uc007yoo.1">
    <property type="organism name" value="mouse"/>
</dbReference>
<dbReference type="AGR" id="MGI:1919557"/>
<dbReference type="MGI" id="MGI:1919557">
    <property type="gene designation" value="2510002D24Rik"/>
</dbReference>
<dbReference type="VEuPathDB" id="HostDB:ENSMUSG00000071632"/>
<dbReference type="eggNOG" id="ENOG502S4W2">
    <property type="taxonomic scope" value="Eukaryota"/>
</dbReference>
<dbReference type="GeneTree" id="ENSGT00390000002511"/>
<dbReference type="HOGENOM" id="CLU_130047_1_0_1"/>
<dbReference type="InParanoid" id="Q3U595"/>
<dbReference type="OMA" id="QFHSYYV"/>
<dbReference type="OrthoDB" id="5946508at2759"/>
<dbReference type="PhylomeDB" id="Q3U595"/>
<dbReference type="TreeFam" id="TF324380"/>
<dbReference type="BioGRID-ORCS" id="72307">
    <property type="hits" value="3 hits in 79 CRISPR screens"/>
</dbReference>
<dbReference type="PRO" id="PR:Q3U595"/>
<dbReference type="Proteomes" id="UP000000589">
    <property type="component" value="Chromosome 16"/>
</dbReference>
<dbReference type="RNAct" id="Q3U595">
    <property type="molecule type" value="protein"/>
</dbReference>
<dbReference type="Bgee" id="ENSMUSG00000071632">
    <property type="expression patterns" value="Expressed in retinal neural layer and 271 other cell types or tissues"/>
</dbReference>
<dbReference type="ExpressionAtlas" id="Q3U595">
    <property type="expression patterns" value="baseline and differential"/>
</dbReference>
<dbReference type="GO" id="GO:0045202">
    <property type="term" value="C:synapse"/>
    <property type="evidence" value="ECO:0000314"/>
    <property type="project" value="UniProtKB"/>
</dbReference>
<dbReference type="GO" id="GO:0043083">
    <property type="term" value="C:synaptic cleft"/>
    <property type="evidence" value="ECO:0000314"/>
    <property type="project" value="UniProtKB"/>
</dbReference>
<dbReference type="GO" id="GO:1900272">
    <property type="term" value="P:negative regulation of long-term synaptic potentiation"/>
    <property type="evidence" value="ECO:0000315"/>
    <property type="project" value="UniProtKB"/>
</dbReference>
<dbReference type="GO" id="GO:0048167">
    <property type="term" value="P:regulation of synaptic plasticity"/>
    <property type="evidence" value="ECO:0000315"/>
    <property type="project" value="UniProtKB"/>
</dbReference>
<dbReference type="InterPro" id="IPR021475">
    <property type="entry name" value="Pants/Emi1-like"/>
</dbReference>
<dbReference type="PANTHER" id="PTHR28052">
    <property type="entry name" value="UPF0545 PROTEIN C22ORF39"/>
    <property type="match status" value="1"/>
</dbReference>
<dbReference type="PANTHER" id="PTHR28052:SF1">
    <property type="entry name" value="UPF0545 PROTEIN C22ORF39"/>
    <property type="match status" value="1"/>
</dbReference>
<dbReference type="Pfam" id="PF11326">
    <property type="entry name" value="PANTS-like"/>
    <property type="match status" value="1"/>
</dbReference>
<protein>
    <recommendedName>
        <fullName evidence="4">Synaptic plasticity regulator PANTS</fullName>
    </recommendedName>
    <alternativeName>
        <fullName evidence="3">Plasticity-associated neural transcript short</fullName>
    </alternativeName>
</protein>
<reference key="1">
    <citation type="journal article" date="2005" name="Science">
        <title>The transcriptional landscape of the mammalian genome.</title>
        <authorList>
            <person name="Carninci P."/>
            <person name="Kasukawa T."/>
            <person name="Katayama S."/>
            <person name="Gough J."/>
            <person name="Frith M.C."/>
            <person name="Maeda N."/>
            <person name="Oyama R."/>
            <person name="Ravasi T."/>
            <person name="Lenhard B."/>
            <person name="Wells C."/>
            <person name="Kodzius R."/>
            <person name="Shimokawa K."/>
            <person name="Bajic V.B."/>
            <person name="Brenner S.E."/>
            <person name="Batalov S."/>
            <person name="Forrest A.R."/>
            <person name="Zavolan M."/>
            <person name="Davis M.J."/>
            <person name="Wilming L.G."/>
            <person name="Aidinis V."/>
            <person name="Allen J.E."/>
            <person name="Ambesi-Impiombato A."/>
            <person name="Apweiler R."/>
            <person name="Aturaliya R.N."/>
            <person name="Bailey T.L."/>
            <person name="Bansal M."/>
            <person name="Baxter L."/>
            <person name="Beisel K.W."/>
            <person name="Bersano T."/>
            <person name="Bono H."/>
            <person name="Chalk A.M."/>
            <person name="Chiu K.P."/>
            <person name="Choudhary V."/>
            <person name="Christoffels A."/>
            <person name="Clutterbuck D.R."/>
            <person name="Crowe M.L."/>
            <person name="Dalla E."/>
            <person name="Dalrymple B.P."/>
            <person name="de Bono B."/>
            <person name="Della Gatta G."/>
            <person name="di Bernardo D."/>
            <person name="Down T."/>
            <person name="Engstrom P."/>
            <person name="Fagiolini M."/>
            <person name="Faulkner G."/>
            <person name="Fletcher C.F."/>
            <person name="Fukushima T."/>
            <person name="Furuno M."/>
            <person name="Futaki S."/>
            <person name="Gariboldi M."/>
            <person name="Georgii-Hemming P."/>
            <person name="Gingeras T.R."/>
            <person name="Gojobori T."/>
            <person name="Green R.E."/>
            <person name="Gustincich S."/>
            <person name="Harbers M."/>
            <person name="Hayashi Y."/>
            <person name="Hensch T.K."/>
            <person name="Hirokawa N."/>
            <person name="Hill D."/>
            <person name="Huminiecki L."/>
            <person name="Iacono M."/>
            <person name="Ikeo K."/>
            <person name="Iwama A."/>
            <person name="Ishikawa T."/>
            <person name="Jakt M."/>
            <person name="Kanapin A."/>
            <person name="Katoh M."/>
            <person name="Kawasawa Y."/>
            <person name="Kelso J."/>
            <person name="Kitamura H."/>
            <person name="Kitano H."/>
            <person name="Kollias G."/>
            <person name="Krishnan S.P."/>
            <person name="Kruger A."/>
            <person name="Kummerfeld S.K."/>
            <person name="Kurochkin I.V."/>
            <person name="Lareau L.F."/>
            <person name="Lazarevic D."/>
            <person name="Lipovich L."/>
            <person name="Liu J."/>
            <person name="Liuni S."/>
            <person name="McWilliam S."/>
            <person name="Madan Babu M."/>
            <person name="Madera M."/>
            <person name="Marchionni L."/>
            <person name="Matsuda H."/>
            <person name="Matsuzawa S."/>
            <person name="Miki H."/>
            <person name="Mignone F."/>
            <person name="Miyake S."/>
            <person name="Morris K."/>
            <person name="Mottagui-Tabar S."/>
            <person name="Mulder N."/>
            <person name="Nakano N."/>
            <person name="Nakauchi H."/>
            <person name="Ng P."/>
            <person name="Nilsson R."/>
            <person name="Nishiguchi S."/>
            <person name="Nishikawa S."/>
            <person name="Nori F."/>
            <person name="Ohara O."/>
            <person name="Okazaki Y."/>
            <person name="Orlando V."/>
            <person name="Pang K.C."/>
            <person name="Pavan W.J."/>
            <person name="Pavesi G."/>
            <person name="Pesole G."/>
            <person name="Petrovsky N."/>
            <person name="Piazza S."/>
            <person name="Reed J."/>
            <person name="Reid J.F."/>
            <person name="Ring B.Z."/>
            <person name="Ringwald M."/>
            <person name="Rost B."/>
            <person name="Ruan Y."/>
            <person name="Salzberg S.L."/>
            <person name="Sandelin A."/>
            <person name="Schneider C."/>
            <person name="Schoenbach C."/>
            <person name="Sekiguchi K."/>
            <person name="Semple C.A."/>
            <person name="Seno S."/>
            <person name="Sessa L."/>
            <person name="Sheng Y."/>
            <person name="Shibata Y."/>
            <person name="Shimada H."/>
            <person name="Shimada K."/>
            <person name="Silva D."/>
            <person name="Sinclair B."/>
            <person name="Sperling S."/>
            <person name="Stupka E."/>
            <person name="Sugiura K."/>
            <person name="Sultana R."/>
            <person name="Takenaka Y."/>
            <person name="Taki K."/>
            <person name="Tammoja K."/>
            <person name="Tan S.L."/>
            <person name="Tang S."/>
            <person name="Taylor M.S."/>
            <person name="Tegner J."/>
            <person name="Teichmann S.A."/>
            <person name="Ueda H.R."/>
            <person name="van Nimwegen E."/>
            <person name="Verardo R."/>
            <person name="Wei C.L."/>
            <person name="Yagi K."/>
            <person name="Yamanishi H."/>
            <person name="Zabarovsky E."/>
            <person name="Zhu S."/>
            <person name="Zimmer A."/>
            <person name="Hide W."/>
            <person name="Bult C."/>
            <person name="Grimmond S.M."/>
            <person name="Teasdale R.D."/>
            <person name="Liu E.T."/>
            <person name="Brusic V."/>
            <person name="Quackenbush J."/>
            <person name="Wahlestedt C."/>
            <person name="Mattick J.S."/>
            <person name="Hume D.A."/>
            <person name="Kai C."/>
            <person name="Sasaki D."/>
            <person name="Tomaru Y."/>
            <person name="Fukuda S."/>
            <person name="Kanamori-Katayama M."/>
            <person name="Suzuki M."/>
            <person name="Aoki J."/>
            <person name="Arakawa T."/>
            <person name="Iida J."/>
            <person name="Imamura K."/>
            <person name="Itoh M."/>
            <person name="Kato T."/>
            <person name="Kawaji H."/>
            <person name="Kawagashira N."/>
            <person name="Kawashima T."/>
            <person name="Kojima M."/>
            <person name="Kondo S."/>
            <person name="Konno H."/>
            <person name="Nakano K."/>
            <person name="Ninomiya N."/>
            <person name="Nishio T."/>
            <person name="Okada M."/>
            <person name="Plessy C."/>
            <person name="Shibata K."/>
            <person name="Shiraki T."/>
            <person name="Suzuki S."/>
            <person name="Tagami M."/>
            <person name="Waki K."/>
            <person name="Watahiki A."/>
            <person name="Okamura-Oho Y."/>
            <person name="Suzuki H."/>
            <person name="Kawai J."/>
            <person name="Hayashizaki Y."/>
        </authorList>
    </citation>
    <scope>NUCLEOTIDE SEQUENCE [LARGE SCALE MRNA]</scope>
    <source>
        <strain>C57BL/6J</strain>
        <tissue>Thymus</tissue>
    </source>
</reference>
<reference key="2">
    <citation type="journal article" date="2018" name="Gene Expr. Patterns">
        <title>Age-dependent expression pattern in the mammalian brain of a novel, small peptide encoded in the 22q11.2 deletion syndrome region.</title>
        <authorList>
            <person name="Kragness S."/>
            <person name="Harrison M.A.A."/>
            <person name="Westmoreland J.J."/>
            <person name="Burstain A."/>
            <person name="Earls L.R."/>
        </authorList>
    </citation>
    <scope>TISSUE SPECIFICITY</scope>
    <scope>DEVELOPMENTAL STAGE</scope>
</reference>
<reference key="3">
    <citation type="journal article" date="2022" name="PLoS ONE">
        <title>An Rtn4/Nogo-A-interacting micropeptide modulates synaptic plasticity with age.</title>
        <authorList>
            <person name="Kragness S."/>
            <person name="Clark Z."/>
            <person name="Mullin A."/>
            <person name="Guidry J."/>
            <person name="Earls L.R."/>
        </authorList>
    </citation>
    <scope>FUNCTION</scope>
    <scope>INTERACTION WITH RTN4; NCAM1; RANBP2 AND CCT8</scope>
    <scope>SUBCELLULAR LOCATION</scope>
    <scope>DEVELOPMENTAL STAGE</scope>
</reference>